<keyword id="KW-0004">4Fe-4S</keyword>
<keyword id="KW-0067">ATP-binding</keyword>
<keyword id="KW-0963">Cytoplasm</keyword>
<keyword id="KW-0408">Iron</keyword>
<keyword id="KW-0411">Iron-sulfur</keyword>
<keyword id="KW-0460">Magnesium</keyword>
<keyword id="KW-0479">Metal-binding</keyword>
<keyword id="KW-0547">Nucleotide-binding</keyword>
<keyword id="KW-0694">RNA-binding</keyword>
<keyword id="KW-0808">Transferase</keyword>
<keyword id="KW-0819">tRNA processing</keyword>
<keyword id="KW-0820">tRNA-binding</keyword>
<proteinExistence type="inferred from homology"/>
<accession>B4SRP3</accession>
<name>TTCA_STRM5</name>
<protein>
    <recommendedName>
        <fullName evidence="1">tRNA-cytidine(32) 2-sulfurtransferase</fullName>
        <ecNumber evidence="1">2.8.1.-</ecNumber>
    </recommendedName>
    <alternativeName>
        <fullName evidence="1">Two-thiocytidine biosynthesis protein A</fullName>
    </alternativeName>
    <alternativeName>
        <fullName evidence="1">tRNA 2-thiocytidine biosynthesis protein TtcA</fullName>
    </alternativeName>
</protein>
<comment type="function">
    <text evidence="1">Catalyzes the ATP-dependent 2-thiolation of cytidine in position 32 of tRNA, to form 2-thiocytidine (s(2)C32). The sulfur atoms are provided by the cysteine/cysteine desulfurase (IscS) system.</text>
</comment>
<comment type="catalytic activity">
    <reaction evidence="1">
        <text>cytidine(32) in tRNA + S-sulfanyl-L-cysteinyl-[cysteine desulfurase] + AH2 + ATP = 2-thiocytidine(32) in tRNA + L-cysteinyl-[cysteine desulfurase] + A + AMP + diphosphate + H(+)</text>
        <dbReference type="Rhea" id="RHEA:57048"/>
        <dbReference type="Rhea" id="RHEA-COMP:10288"/>
        <dbReference type="Rhea" id="RHEA-COMP:12157"/>
        <dbReference type="Rhea" id="RHEA-COMP:12158"/>
        <dbReference type="Rhea" id="RHEA-COMP:14821"/>
        <dbReference type="ChEBI" id="CHEBI:13193"/>
        <dbReference type="ChEBI" id="CHEBI:15378"/>
        <dbReference type="ChEBI" id="CHEBI:17499"/>
        <dbReference type="ChEBI" id="CHEBI:29950"/>
        <dbReference type="ChEBI" id="CHEBI:30616"/>
        <dbReference type="ChEBI" id="CHEBI:33019"/>
        <dbReference type="ChEBI" id="CHEBI:61963"/>
        <dbReference type="ChEBI" id="CHEBI:82748"/>
        <dbReference type="ChEBI" id="CHEBI:141453"/>
        <dbReference type="ChEBI" id="CHEBI:456215"/>
    </reaction>
    <physiologicalReaction direction="left-to-right" evidence="1">
        <dbReference type="Rhea" id="RHEA:57049"/>
    </physiologicalReaction>
</comment>
<comment type="cofactor">
    <cofactor evidence="1">
        <name>Mg(2+)</name>
        <dbReference type="ChEBI" id="CHEBI:18420"/>
    </cofactor>
</comment>
<comment type="cofactor">
    <cofactor evidence="1">
        <name>[4Fe-4S] cluster</name>
        <dbReference type="ChEBI" id="CHEBI:49883"/>
    </cofactor>
    <text evidence="1">Binds 1 [4Fe-4S] cluster per subunit. The cluster is chelated by three Cys residues, the fourth Fe has a free coordination site that may bind a sulfur atom transferred from the persulfide of IscS.</text>
</comment>
<comment type="pathway">
    <text evidence="1">tRNA modification.</text>
</comment>
<comment type="subunit">
    <text evidence="1">Homodimer.</text>
</comment>
<comment type="subcellular location">
    <subcellularLocation>
        <location evidence="1">Cytoplasm</location>
    </subcellularLocation>
</comment>
<comment type="miscellaneous">
    <text evidence="1">The thiolation reaction likely consists of two steps: a first activation step by ATP to form an adenylated intermediate of the target base of tRNA, and a second nucleophilic substitution step of the sulfur (S) atom supplied by the hydrosulfide attached to the Fe-S cluster.</text>
</comment>
<comment type="similarity">
    <text evidence="1">Belongs to the TtcA family.</text>
</comment>
<gene>
    <name evidence="1" type="primary">ttcA</name>
    <name type="ordered locus">Smal_0058</name>
</gene>
<dbReference type="EC" id="2.8.1.-" evidence="1"/>
<dbReference type="EMBL" id="CP001111">
    <property type="protein sequence ID" value="ACF49763.1"/>
    <property type="molecule type" value="Genomic_DNA"/>
</dbReference>
<dbReference type="RefSeq" id="WP_012509638.1">
    <property type="nucleotide sequence ID" value="NC_011071.1"/>
</dbReference>
<dbReference type="SMR" id="B4SRP3"/>
<dbReference type="STRING" id="391008.Smal_0058"/>
<dbReference type="KEGG" id="smt:Smal_0058"/>
<dbReference type="eggNOG" id="COG0037">
    <property type="taxonomic scope" value="Bacteria"/>
</dbReference>
<dbReference type="HOGENOM" id="CLU_026481_0_0_6"/>
<dbReference type="OrthoDB" id="9801054at2"/>
<dbReference type="Proteomes" id="UP000001867">
    <property type="component" value="Chromosome"/>
</dbReference>
<dbReference type="GO" id="GO:0005737">
    <property type="term" value="C:cytoplasm"/>
    <property type="evidence" value="ECO:0007669"/>
    <property type="project" value="UniProtKB-SubCell"/>
</dbReference>
<dbReference type="GO" id="GO:0051539">
    <property type="term" value="F:4 iron, 4 sulfur cluster binding"/>
    <property type="evidence" value="ECO:0007669"/>
    <property type="project" value="UniProtKB-UniRule"/>
</dbReference>
<dbReference type="GO" id="GO:0005524">
    <property type="term" value="F:ATP binding"/>
    <property type="evidence" value="ECO:0007669"/>
    <property type="project" value="UniProtKB-UniRule"/>
</dbReference>
<dbReference type="GO" id="GO:0000287">
    <property type="term" value="F:magnesium ion binding"/>
    <property type="evidence" value="ECO:0007669"/>
    <property type="project" value="UniProtKB-UniRule"/>
</dbReference>
<dbReference type="GO" id="GO:0016783">
    <property type="term" value="F:sulfurtransferase activity"/>
    <property type="evidence" value="ECO:0007669"/>
    <property type="project" value="UniProtKB-UniRule"/>
</dbReference>
<dbReference type="GO" id="GO:0000049">
    <property type="term" value="F:tRNA binding"/>
    <property type="evidence" value="ECO:0007669"/>
    <property type="project" value="UniProtKB-KW"/>
</dbReference>
<dbReference type="GO" id="GO:0034227">
    <property type="term" value="P:tRNA thio-modification"/>
    <property type="evidence" value="ECO:0007669"/>
    <property type="project" value="UniProtKB-UniRule"/>
</dbReference>
<dbReference type="CDD" id="cd24138">
    <property type="entry name" value="TtcA-like"/>
    <property type="match status" value="1"/>
</dbReference>
<dbReference type="Gene3D" id="3.40.50.620">
    <property type="entry name" value="HUPs"/>
    <property type="match status" value="1"/>
</dbReference>
<dbReference type="HAMAP" id="MF_01850">
    <property type="entry name" value="TtcA"/>
    <property type="match status" value="1"/>
</dbReference>
<dbReference type="InterPro" id="IPR014729">
    <property type="entry name" value="Rossmann-like_a/b/a_fold"/>
</dbReference>
<dbReference type="InterPro" id="IPR011063">
    <property type="entry name" value="TilS/TtcA_N"/>
</dbReference>
<dbReference type="InterPro" id="IPR012089">
    <property type="entry name" value="tRNA_Cyd_32_2_STrfase"/>
</dbReference>
<dbReference type="InterPro" id="IPR035107">
    <property type="entry name" value="tRNA_thiolation_TtcA_Ctu1"/>
</dbReference>
<dbReference type="NCBIfam" id="NF007972">
    <property type="entry name" value="PRK10696.1"/>
    <property type="match status" value="1"/>
</dbReference>
<dbReference type="PANTHER" id="PTHR43686:SF1">
    <property type="entry name" value="AMINOTRAN_5 DOMAIN-CONTAINING PROTEIN"/>
    <property type="match status" value="1"/>
</dbReference>
<dbReference type="PANTHER" id="PTHR43686">
    <property type="entry name" value="SULFURTRANSFERASE-RELATED"/>
    <property type="match status" value="1"/>
</dbReference>
<dbReference type="Pfam" id="PF01171">
    <property type="entry name" value="ATP_bind_3"/>
    <property type="match status" value="1"/>
</dbReference>
<dbReference type="PIRSF" id="PIRSF004976">
    <property type="entry name" value="ATPase_YdaO"/>
    <property type="match status" value="1"/>
</dbReference>
<dbReference type="SUPFAM" id="SSF52402">
    <property type="entry name" value="Adenine nucleotide alpha hydrolases-like"/>
    <property type="match status" value="1"/>
</dbReference>
<feature type="chain" id="PRO_1000188662" description="tRNA-cytidine(32) 2-sulfurtransferase">
    <location>
        <begin position="1"/>
        <end position="298"/>
    </location>
</feature>
<feature type="region of interest" description="Disordered" evidence="2">
    <location>
        <begin position="1"/>
        <end position="26"/>
    </location>
</feature>
<feature type="short sequence motif" description="PP-loop motif" evidence="1">
    <location>
        <begin position="57"/>
        <end position="62"/>
    </location>
</feature>
<feature type="binding site" evidence="1">
    <location>
        <position position="132"/>
    </location>
    <ligand>
        <name>[4Fe-4S] cluster</name>
        <dbReference type="ChEBI" id="CHEBI:49883"/>
    </ligand>
</feature>
<feature type="binding site" evidence="1">
    <location>
        <position position="135"/>
    </location>
    <ligand>
        <name>[4Fe-4S] cluster</name>
        <dbReference type="ChEBI" id="CHEBI:49883"/>
    </ligand>
</feature>
<feature type="binding site" evidence="1">
    <location>
        <position position="223"/>
    </location>
    <ligand>
        <name>[4Fe-4S] cluster</name>
        <dbReference type="ChEBI" id="CHEBI:49883"/>
    </ligand>
</feature>
<sequence>MTAVISLPDPPQRASRGPRVAGPGQDRLGKRLRRQVGQAIADFGMIEAGDKVMVCLSGGKDSYTLLDLLLQLQKRAPVPFELVAVNLDQKQPGFPEHVLPEYLAALGVPYQIIEQDTYSVVSRVIPEGRTMCSLCSRLRRGALYNHAKAHGFTRIALGHHCDDMVATLFMNLFHHAKLAAMPPKLLSDDGQHVVIRPLAYVREHDIAEYAQARRFPIIPCTLCGSQESLQRRQVGLMLKQWDQDHPGRIEQIARAMADVRPAQLADATLFDFRALGHSGHAAHADAWLADAVPETPAD</sequence>
<evidence type="ECO:0000255" key="1">
    <source>
        <dbReference type="HAMAP-Rule" id="MF_01850"/>
    </source>
</evidence>
<evidence type="ECO:0000256" key="2">
    <source>
        <dbReference type="SAM" id="MobiDB-lite"/>
    </source>
</evidence>
<organism>
    <name type="scientific">Stenotrophomonas maltophilia (strain R551-3)</name>
    <dbReference type="NCBI Taxonomy" id="391008"/>
    <lineage>
        <taxon>Bacteria</taxon>
        <taxon>Pseudomonadati</taxon>
        <taxon>Pseudomonadota</taxon>
        <taxon>Gammaproteobacteria</taxon>
        <taxon>Lysobacterales</taxon>
        <taxon>Lysobacteraceae</taxon>
        <taxon>Stenotrophomonas</taxon>
        <taxon>Stenotrophomonas maltophilia group</taxon>
    </lineage>
</organism>
<reference key="1">
    <citation type="submission" date="2008-06" db="EMBL/GenBank/DDBJ databases">
        <title>Complete sequence of Stenotrophomonas maltophilia R551-3.</title>
        <authorList>
            <consortium name="US DOE Joint Genome Institute"/>
            <person name="Lucas S."/>
            <person name="Copeland A."/>
            <person name="Lapidus A."/>
            <person name="Glavina del Rio T."/>
            <person name="Dalin E."/>
            <person name="Tice H."/>
            <person name="Pitluck S."/>
            <person name="Chain P."/>
            <person name="Malfatti S."/>
            <person name="Shin M."/>
            <person name="Vergez L."/>
            <person name="Lang D."/>
            <person name="Schmutz J."/>
            <person name="Larimer F."/>
            <person name="Land M."/>
            <person name="Hauser L."/>
            <person name="Kyrpides N."/>
            <person name="Mikhailova N."/>
            <person name="Taghavi S."/>
            <person name="Monchy S."/>
            <person name="Newman L."/>
            <person name="Vangronsveld J."/>
            <person name="van der Lelie D."/>
            <person name="Richardson P."/>
        </authorList>
    </citation>
    <scope>NUCLEOTIDE SEQUENCE [LARGE SCALE GENOMIC DNA]</scope>
    <source>
        <strain>R551-3</strain>
    </source>
</reference>